<accession>Q2MY55</accession>
<proteinExistence type="evidence at transcript level"/>
<keyword id="KW-0175">Coiled coil</keyword>
<keyword id="KW-0325">Glycoprotein</keyword>
<keyword id="KW-0378">Hydrolase</keyword>
<keyword id="KW-0442">Lipid degradation</keyword>
<keyword id="KW-0443">Lipid metabolism</keyword>
<keyword id="KW-0611">Plant defense</keyword>
<keyword id="KW-1185">Reference proteome</keyword>
<keyword id="KW-0732">Signal</keyword>
<keyword id="KW-0758">Storage protein</keyword>
<keyword id="KW-0926">Vacuole</keyword>
<comment type="function">
    <text evidence="1">Probable lipolytic acyl hydrolase (LAH), an activity which is thought to be involved in the response of tubers to pathogens.</text>
</comment>
<comment type="subcellular location">
    <subcellularLocation>
        <location evidence="1">Vacuole</location>
    </subcellularLocation>
</comment>
<comment type="tissue specificity">
    <text evidence="4">Tuber.</text>
</comment>
<comment type="developmental stage">
    <text evidence="4">Accumulates progressively during tuber formation from stolon.</text>
</comment>
<comment type="domain">
    <text>The nitrogen atoms of the two glycine residues in the GGXR motif define the oxyanion hole, and stabilize the oxyanion that forms during the nucleophilic attack by the catalytic serine during substrate cleavage.</text>
</comment>
<comment type="miscellaneous">
    <text>Patatin have a dual role as a somatic storage protein and as an enzyme involved in host resistance.</text>
</comment>
<comment type="similarity">
    <text evidence="5">Belongs to the patatin family.</text>
</comment>
<sequence length="387" mass="42652">MATTKSFLILIVMILATTSSTFASLEEMVTVLSIDGGGIKGIIPGTILEFLEGQLQKMDNNADARLADYFDVIGGTSTGGLLTSMITTPNENNRPFAAANEIVPFFFEHGPHIFNSSTGQFFGPKYDGKYLMQVLQENLGETRVHQALTEVAISSLDIKTNKPVIFTKSNLAKSPELDAKMYDICYSTAAAPTYFPPHYFTTNTINGDKYEFNLVDGAVATVADPALLSISVATRLAEKDPAFASIRSLNYKKMLLLSLGTGTTSEFDKTYTAEETAKWGAIQWMLVIQRMTDAASSYMTDYYLSTVFQAQNSQKNYLRVQENALTGTTTEMDDASEANMESLVQVGENLLKKPVSKDNPETYEEALKRFAKLLSDRKKLRANKASY</sequence>
<reference key="1">
    <citation type="journal article" date="2006" name="Genetics">
        <title>Structural diversity and differential transcription of the patatin multicopy gene family during potato tuber development.</title>
        <authorList>
            <person name="Stupar R.M."/>
            <person name="Beaubien K.A."/>
            <person name="Jin W."/>
            <person name="Song J."/>
            <person name="Lee M.-K."/>
            <person name="Wu C."/>
            <person name="Zhang H.-B."/>
            <person name="Han B."/>
            <person name="Jiang J."/>
        </authorList>
    </citation>
    <scope>NUCLEOTIDE SEQUENCE [MRNA]</scope>
    <scope>DEVELOPMENTAL STAGE</scope>
    <scope>TISSUE SPECIFICITY</scope>
    <source>
        <strain>cv. Kennebec</strain>
    </source>
</reference>
<dbReference type="EC" id="3.1.1.-"/>
<dbReference type="EMBL" id="DQ274483">
    <property type="protein sequence ID" value="ABC55683.1"/>
    <property type="molecule type" value="mRNA"/>
</dbReference>
<dbReference type="SMR" id="Q2MY55"/>
<dbReference type="InParanoid" id="Q2MY55"/>
<dbReference type="Proteomes" id="UP000011115">
    <property type="component" value="Unassembled WGS sequence"/>
</dbReference>
<dbReference type="ExpressionAtlas" id="Q2MY55">
    <property type="expression patterns" value="baseline"/>
</dbReference>
<dbReference type="GO" id="GO:0005773">
    <property type="term" value="C:vacuole"/>
    <property type="evidence" value="ECO:0007669"/>
    <property type="project" value="UniProtKB-SubCell"/>
</dbReference>
<dbReference type="GO" id="GO:0016787">
    <property type="term" value="F:hydrolase activity"/>
    <property type="evidence" value="ECO:0007669"/>
    <property type="project" value="UniProtKB-KW"/>
</dbReference>
<dbReference type="GO" id="GO:0045735">
    <property type="term" value="F:nutrient reservoir activity"/>
    <property type="evidence" value="ECO:0007669"/>
    <property type="project" value="UniProtKB-KW"/>
</dbReference>
<dbReference type="GO" id="GO:0006952">
    <property type="term" value="P:defense response"/>
    <property type="evidence" value="ECO:0007669"/>
    <property type="project" value="UniProtKB-KW"/>
</dbReference>
<dbReference type="GO" id="GO:0016042">
    <property type="term" value="P:lipid catabolic process"/>
    <property type="evidence" value="ECO:0007669"/>
    <property type="project" value="UniProtKB-KW"/>
</dbReference>
<dbReference type="Gene3D" id="3.40.1090.10">
    <property type="entry name" value="Cytosolic phospholipase A2 catalytic domain"/>
    <property type="match status" value="1"/>
</dbReference>
<dbReference type="InterPro" id="IPR016035">
    <property type="entry name" value="Acyl_Trfase/lysoPLipase"/>
</dbReference>
<dbReference type="InterPro" id="IPR002641">
    <property type="entry name" value="PNPLA_dom"/>
</dbReference>
<dbReference type="PANTHER" id="PTHR32176:SF85">
    <property type="entry name" value="PATATIN GROUP D-2"/>
    <property type="match status" value="1"/>
</dbReference>
<dbReference type="PANTHER" id="PTHR32176">
    <property type="entry name" value="XYLOSE ISOMERASE"/>
    <property type="match status" value="1"/>
</dbReference>
<dbReference type="Pfam" id="PF01734">
    <property type="entry name" value="Patatin"/>
    <property type="match status" value="1"/>
</dbReference>
<dbReference type="SUPFAM" id="SSF52151">
    <property type="entry name" value="FabD/lysophospholipase-like"/>
    <property type="match status" value="1"/>
</dbReference>
<dbReference type="PROSITE" id="PS51635">
    <property type="entry name" value="PNPLA"/>
    <property type="match status" value="1"/>
</dbReference>
<feature type="signal peptide" evidence="2">
    <location>
        <begin position="1"/>
        <end position="23"/>
    </location>
</feature>
<feature type="chain" id="PRO_0000296705" description="Patatin group D-3">
    <location>
        <begin position="24"/>
        <end position="387"/>
    </location>
</feature>
<feature type="domain" description="PNPLA" evidence="3">
    <location>
        <begin position="32"/>
        <end position="230"/>
    </location>
</feature>
<feature type="coiled-coil region" evidence="2">
    <location>
        <begin position="361"/>
        <end position="385"/>
    </location>
</feature>
<feature type="short sequence motif" description="GXGXXG" evidence="3">
    <location>
        <begin position="36"/>
        <end position="41"/>
    </location>
</feature>
<feature type="short sequence motif" description="GXSXG" evidence="3">
    <location>
        <begin position="75"/>
        <end position="79"/>
    </location>
</feature>
<feature type="short sequence motif" description="DGA/G" evidence="3">
    <location>
        <begin position="216"/>
        <end position="218"/>
    </location>
</feature>
<feature type="active site" description="Nucleophile" evidence="3">
    <location>
        <position position="77"/>
    </location>
</feature>
<feature type="active site" description="Proton acceptor" evidence="3">
    <location>
        <position position="216"/>
    </location>
</feature>
<feature type="glycosylation site" description="N-linked (GlcNAc...) asparagine" evidence="2">
    <location>
        <position position="115"/>
    </location>
</feature>
<organism>
    <name type="scientific">Solanum tuberosum</name>
    <name type="common">Potato</name>
    <dbReference type="NCBI Taxonomy" id="4113"/>
    <lineage>
        <taxon>Eukaryota</taxon>
        <taxon>Viridiplantae</taxon>
        <taxon>Streptophyta</taxon>
        <taxon>Embryophyta</taxon>
        <taxon>Tracheophyta</taxon>
        <taxon>Spermatophyta</taxon>
        <taxon>Magnoliopsida</taxon>
        <taxon>eudicotyledons</taxon>
        <taxon>Gunneridae</taxon>
        <taxon>Pentapetalae</taxon>
        <taxon>asterids</taxon>
        <taxon>lamiids</taxon>
        <taxon>Solanales</taxon>
        <taxon>Solanaceae</taxon>
        <taxon>Solanoideae</taxon>
        <taxon>Solaneae</taxon>
        <taxon>Solanum</taxon>
    </lineage>
</organism>
<protein>
    <recommendedName>
        <fullName>Patatin group D-3</fullName>
        <ecNumber>3.1.1.-</ecNumber>
    </recommendedName>
</protein>
<evidence type="ECO:0000250" key="1"/>
<evidence type="ECO:0000255" key="2"/>
<evidence type="ECO:0000255" key="3">
    <source>
        <dbReference type="PROSITE-ProRule" id="PRU01161"/>
    </source>
</evidence>
<evidence type="ECO:0000269" key="4">
    <source>
    </source>
</evidence>
<evidence type="ECO:0000305" key="5"/>
<name>PATD3_SOLTU</name>